<name>GCSP2_PSEPK</name>
<protein>
    <recommendedName>
        <fullName>Glycine dehydrogenase (decarboxylating) 2</fullName>
        <ecNumber>1.4.4.2</ecNumber>
    </recommendedName>
    <alternativeName>
        <fullName>Glycine cleavage system P-protein 2</fullName>
    </alternativeName>
    <alternativeName>
        <fullName>Glycine decarboxylase 2</fullName>
    </alternativeName>
    <alternativeName>
        <fullName>Glycine dehydrogenase (aminomethyl-transferring) 2</fullName>
    </alternativeName>
</protein>
<comment type="function">
    <text evidence="1">The glycine cleavage system catalyzes the degradation of glycine. The P protein binds the alpha-amino group of glycine through its pyridoxal phosphate cofactor; CO(2) is released and the remaining methylamine moiety is then transferred to the lipoamide cofactor of the H protein (By similarity).</text>
</comment>
<comment type="catalytic activity">
    <reaction>
        <text>N(6)-[(R)-lipoyl]-L-lysyl-[glycine-cleavage complex H protein] + glycine + H(+) = N(6)-[(R)-S(8)-aminomethyldihydrolipoyl]-L-lysyl-[glycine-cleavage complex H protein] + CO2</text>
        <dbReference type="Rhea" id="RHEA:24304"/>
        <dbReference type="Rhea" id="RHEA-COMP:10494"/>
        <dbReference type="Rhea" id="RHEA-COMP:10495"/>
        <dbReference type="ChEBI" id="CHEBI:15378"/>
        <dbReference type="ChEBI" id="CHEBI:16526"/>
        <dbReference type="ChEBI" id="CHEBI:57305"/>
        <dbReference type="ChEBI" id="CHEBI:83099"/>
        <dbReference type="ChEBI" id="CHEBI:83143"/>
        <dbReference type="EC" id="1.4.4.2"/>
    </reaction>
</comment>
<comment type="cofactor">
    <cofactor evidence="1">
        <name>pyridoxal 5'-phosphate</name>
        <dbReference type="ChEBI" id="CHEBI:597326"/>
    </cofactor>
</comment>
<comment type="subunit">
    <text evidence="1">The glycine cleavage system is composed of four proteins: P, T, L and H.</text>
</comment>
<comment type="similarity">
    <text evidence="2">Belongs to the GcvP family.</text>
</comment>
<keyword id="KW-0560">Oxidoreductase</keyword>
<keyword id="KW-0663">Pyridoxal phosphate</keyword>
<keyword id="KW-1185">Reference proteome</keyword>
<accession>Q88CI9</accession>
<proteinExistence type="inferred from homology"/>
<gene>
    <name type="primary">gcvP2</name>
    <name type="synonym">gcvP-2</name>
    <name type="ordered locus">PP_5192</name>
</gene>
<organism>
    <name type="scientific">Pseudomonas putida (strain ATCC 47054 / DSM 6125 / CFBP 8728 / NCIMB 11950 / KT2440)</name>
    <dbReference type="NCBI Taxonomy" id="160488"/>
    <lineage>
        <taxon>Bacteria</taxon>
        <taxon>Pseudomonadati</taxon>
        <taxon>Pseudomonadota</taxon>
        <taxon>Gammaproteobacteria</taxon>
        <taxon>Pseudomonadales</taxon>
        <taxon>Pseudomonadaceae</taxon>
        <taxon>Pseudomonas</taxon>
    </lineage>
</organism>
<feature type="chain" id="PRO_0000166928" description="Glycine dehydrogenase (decarboxylating) 2">
    <location>
        <begin position="1"/>
        <end position="957"/>
    </location>
</feature>
<feature type="modified residue" description="N6-(pyridoxal phosphate)lysine" evidence="1">
    <location>
        <position position="707"/>
    </location>
</feature>
<evidence type="ECO:0000250" key="1"/>
<evidence type="ECO:0000305" key="2"/>
<reference key="1">
    <citation type="journal article" date="2002" name="Environ. Microbiol.">
        <title>Complete genome sequence and comparative analysis of the metabolically versatile Pseudomonas putida KT2440.</title>
        <authorList>
            <person name="Nelson K.E."/>
            <person name="Weinel C."/>
            <person name="Paulsen I.T."/>
            <person name="Dodson R.J."/>
            <person name="Hilbert H."/>
            <person name="Martins dos Santos V.A.P."/>
            <person name="Fouts D.E."/>
            <person name="Gill S.R."/>
            <person name="Pop M."/>
            <person name="Holmes M."/>
            <person name="Brinkac L.M."/>
            <person name="Beanan M.J."/>
            <person name="DeBoy R.T."/>
            <person name="Daugherty S.C."/>
            <person name="Kolonay J.F."/>
            <person name="Madupu R."/>
            <person name="Nelson W.C."/>
            <person name="White O."/>
            <person name="Peterson J.D."/>
            <person name="Khouri H.M."/>
            <person name="Hance I."/>
            <person name="Chris Lee P."/>
            <person name="Holtzapple E.K."/>
            <person name="Scanlan D."/>
            <person name="Tran K."/>
            <person name="Moazzez A."/>
            <person name="Utterback T.R."/>
            <person name="Rizzo M."/>
            <person name="Lee K."/>
            <person name="Kosack D."/>
            <person name="Moestl D."/>
            <person name="Wedler H."/>
            <person name="Lauber J."/>
            <person name="Stjepandic D."/>
            <person name="Hoheisel J."/>
            <person name="Straetz M."/>
            <person name="Heim S."/>
            <person name="Kiewitz C."/>
            <person name="Eisen J.A."/>
            <person name="Timmis K.N."/>
            <person name="Duesterhoeft A."/>
            <person name="Tuemmler B."/>
            <person name="Fraser C.M."/>
        </authorList>
    </citation>
    <scope>NUCLEOTIDE SEQUENCE [LARGE SCALE GENOMIC DNA]</scope>
    <source>
        <strain>ATCC 47054 / DSM 6125 / CFBP 8728 / NCIMB 11950 / KT2440</strain>
    </source>
</reference>
<sequence length="957" mass="104038">MSQSPSLHQLQELNPFLRRHLGPDATEQQAMLNALGIASRNELIEQTVPPDIRLNRPLDLPAALDEQAALAKLAGYAEQNQVWTSLIGMGYHGTITPTVILRNVLENPGWYTAYTPYQPEIAQGRLEALLNFQQMVIDLTGLPLANASLLDEATAAAEAMALAKRVARNKSNAFFADEHCHPQTLSVLKTRAEGFGFELIVDSVDNLAKHSVFGALLQYPDTHGEVRDLRPLIDQLHSQQALACVAADLLSLVVLAPPGELGADVVLGSTQRFGVPMGYGGPHAAYFACRDDYKRAMPGRIIGVSRDARGNTALRMALQTREQHIRREKANSNICTAQVLLANIAGFYAVYHGPEGLQRIAQRVHRLTFILAAGLEAKGIKRLNQHFFDTLTLNVGGAQAAIIESAEAAHINLRILGRGHLGVSLDETCTEQTVLRLLDIFLGVDHGLEITALDQLALPEGIPASLVRRTPFLAHPVFNLHHSETEMLRYLKQLENKDLALNQSMIPLGSCTMKLNATSEMIPITWPGFAQLHPFAPAAQAAGYKAMIDELESWLCAITGFDAICMQPNSGAQGEYAGLMAITRYHCSRHQPMRTLCLIPSSAHGTNPASAQMAGMEVVIVDCDNDGNVDLADLKAKAHAAGERLSCLMITYPSTHGVYEEGIREICDVVHQYGGQVYMDGANLNAQVGLARPADIGADVSHMNLHKTFCIPHGGGGPGMGPIGIRAHLKPFVASHPVVPVPGLDPNNSAVSAAPWGSASILPISWMYIAMMGPQLADASEVAILSANYLASQLGAAFPVLYRGRNQRVAHECILDLRPLKALTGISEEDVAKRLMDYGFHAPTMSFPVPGTLMVEPTESESKAELDRFVEAMLAIRAEIDEVQQGNWPAENNPLKHAPHTLADVLGVWDRPYSLEQAVAPSAHVRQHKYWPAVNRVDNVYGDRNLFCACVPVEAYR</sequence>
<dbReference type="EC" id="1.4.4.2"/>
<dbReference type="EMBL" id="AE015451">
    <property type="protein sequence ID" value="AAN70757.1"/>
    <property type="molecule type" value="Genomic_DNA"/>
</dbReference>
<dbReference type="RefSeq" id="NP_747293.1">
    <property type="nucleotide sequence ID" value="NC_002947.4"/>
</dbReference>
<dbReference type="SMR" id="Q88CI9"/>
<dbReference type="STRING" id="160488.PP_5192"/>
<dbReference type="PaxDb" id="160488-PP_5192"/>
<dbReference type="KEGG" id="ppu:PP_5192"/>
<dbReference type="PATRIC" id="fig|160488.4.peg.5540"/>
<dbReference type="eggNOG" id="COG0403">
    <property type="taxonomic scope" value="Bacteria"/>
</dbReference>
<dbReference type="eggNOG" id="COG1003">
    <property type="taxonomic scope" value="Bacteria"/>
</dbReference>
<dbReference type="HOGENOM" id="CLU_004620_1_1_6"/>
<dbReference type="OrthoDB" id="9801272at2"/>
<dbReference type="PhylomeDB" id="Q88CI9"/>
<dbReference type="BioCyc" id="PPUT160488:G1G01-5538-MONOMER"/>
<dbReference type="Proteomes" id="UP000000556">
    <property type="component" value="Chromosome"/>
</dbReference>
<dbReference type="GO" id="GO:0005829">
    <property type="term" value="C:cytosol"/>
    <property type="evidence" value="ECO:0007669"/>
    <property type="project" value="TreeGrafter"/>
</dbReference>
<dbReference type="GO" id="GO:0005960">
    <property type="term" value="C:glycine cleavage complex"/>
    <property type="evidence" value="ECO:0007669"/>
    <property type="project" value="TreeGrafter"/>
</dbReference>
<dbReference type="GO" id="GO:0016594">
    <property type="term" value="F:glycine binding"/>
    <property type="evidence" value="ECO:0007669"/>
    <property type="project" value="TreeGrafter"/>
</dbReference>
<dbReference type="GO" id="GO:0004375">
    <property type="term" value="F:glycine dehydrogenase (decarboxylating) activity"/>
    <property type="evidence" value="ECO:0007669"/>
    <property type="project" value="UniProtKB-EC"/>
</dbReference>
<dbReference type="GO" id="GO:0030170">
    <property type="term" value="F:pyridoxal phosphate binding"/>
    <property type="evidence" value="ECO:0007669"/>
    <property type="project" value="TreeGrafter"/>
</dbReference>
<dbReference type="GO" id="GO:0019464">
    <property type="term" value="P:glycine decarboxylation via glycine cleavage system"/>
    <property type="evidence" value="ECO:0007669"/>
    <property type="project" value="UniProtKB-UniRule"/>
</dbReference>
<dbReference type="CDD" id="cd00613">
    <property type="entry name" value="GDC-P"/>
    <property type="match status" value="2"/>
</dbReference>
<dbReference type="FunFam" id="3.40.640.10:FF:000005">
    <property type="entry name" value="Glycine dehydrogenase (decarboxylating), mitochondrial"/>
    <property type="match status" value="1"/>
</dbReference>
<dbReference type="FunFam" id="3.90.1150.10:FF:000007">
    <property type="entry name" value="Glycine dehydrogenase (decarboxylating), mitochondrial"/>
    <property type="match status" value="1"/>
</dbReference>
<dbReference type="FunFam" id="3.40.640.10:FF:000007">
    <property type="entry name" value="glycine dehydrogenase (Decarboxylating), mitochondrial"/>
    <property type="match status" value="1"/>
</dbReference>
<dbReference type="Gene3D" id="3.90.1150.10">
    <property type="entry name" value="Aspartate Aminotransferase, domain 1"/>
    <property type="match status" value="1"/>
</dbReference>
<dbReference type="Gene3D" id="3.40.640.10">
    <property type="entry name" value="Type I PLP-dependent aspartate aminotransferase-like (Major domain)"/>
    <property type="match status" value="2"/>
</dbReference>
<dbReference type="HAMAP" id="MF_00711">
    <property type="entry name" value="GcvP"/>
    <property type="match status" value="1"/>
</dbReference>
<dbReference type="InterPro" id="IPR018247">
    <property type="entry name" value="EF_Hand_1_Ca_BS"/>
</dbReference>
<dbReference type="InterPro" id="IPR003437">
    <property type="entry name" value="GcvP"/>
</dbReference>
<dbReference type="InterPro" id="IPR049316">
    <property type="entry name" value="GDC-P_C"/>
</dbReference>
<dbReference type="InterPro" id="IPR049315">
    <property type="entry name" value="GDC-P_N"/>
</dbReference>
<dbReference type="InterPro" id="IPR020581">
    <property type="entry name" value="GDC_P"/>
</dbReference>
<dbReference type="InterPro" id="IPR015424">
    <property type="entry name" value="PyrdxlP-dep_Trfase"/>
</dbReference>
<dbReference type="InterPro" id="IPR015421">
    <property type="entry name" value="PyrdxlP-dep_Trfase_major"/>
</dbReference>
<dbReference type="InterPro" id="IPR015422">
    <property type="entry name" value="PyrdxlP-dep_Trfase_small"/>
</dbReference>
<dbReference type="NCBIfam" id="TIGR00461">
    <property type="entry name" value="gcvP"/>
    <property type="match status" value="1"/>
</dbReference>
<dbReference type="PANTHER" id="PTHR11773:SF13">
    <property type="entry name" value="GLYCINE DEHYDROGENASE (DECARBOXYLATING)"/>
    <property type="match status" value="1"/>
</dbReference>
<dbReference type="PANTHER" id="PTHR11773">
    <property type="entry name" value="GLYCINE DEHYDROGENASE, DECARBOXYLATING"/>
    <property type="match status" value="1"/>
</dbReference>
<dbReference type="Pfam" id="PF21478">
    <property type="entry name" value="GcvP2_C"/>
    <property type="match status" value="1"/>
</dbReference>
<dbReference type="Pfam" id="PF02347">
    <property type="entry name" value="GDC-P"/>
    <property type="match status" value="2"/>
</dbReference>
<dbReference type="SUPFAM" id="SSF53383">
    <property type="entry name" value="PLP-dependent transferases"/>
    <property type="match status" value="2"/>
</dbReference>